<proteinExistence type="inferred from homology"/>
<comment type="function">
    <text evidence="1">Produces ATP from ADP in the presence of a proton gradient across the membrane.</text>
</comment>
<comment type="subunit">
    <text evidence="1">F-type ATPases have 2 components, CF(1) - the catalytic core - and CF(0) - the membrane proton channel. CF(1) has five subunits: alpha(3), beta(3), gamma(1), delta(1), epsilon(1). CF(0) has three main subunits: a, b and c.</text>
</comment>
<comment type="subcellular location">
    <subcellularLocation>
        <location evidence="1">Cell membrane</location>
        <topology evidence="1">Peripheral membrane protein</topology>
    </subcellularLocation>
</comment>
<comment type="similarity">
    <text evidence="1">Belongs to the ATPase epsilon chain family.</text>
</comment>
<dbReference type="EMBL" id="CP001615">
    <property type="protein sequence ID" value="ACQ70235.1"/>
    <property type="molecule type" value="Genomic_DNA"/>
</dbReference>
<dbReference type="RefSeq" id="WP_012727354.1">
    <property type="nucleotide sequence ID" value="NZ_MOEL01000015.1"/>
</dbReference>
<dbReference type="SMR" id="C4KYS2"/>
<dbReference type="STRING" id="360911.EAT1b_1308"/>
<dbReference type="KEGG" id="eat:EAT1b_1308"/>
<dbReference type="eggNOG" id="COG0355">
    <property type="taxonomic scope" value="Bacteria"/>
</dbReference>
<dbReference type="HOGENOM" id="CLU_084338_1_3_9"/>
<dbReference type="OrthoDB" id="9804110at2"/>
<dbReference type="Proteomes" id="UP000000716">
    <property type="component" value="Chromosome"/>
</dbReference>
<dbReference type="GO" id="GO:0005886">
    <property type="term" value="C:plasma membrane"/>
    <property type="evidence" value="ECO:0007669"/>
    <property type="project" value="UniProtKB-SubCell"/>
</dbReference>
<dbReference type="GO" id="GO:0045259">
    <property type="term" value="C:proton-transporting ATP synthase complex"/>
    <property type="evidence" value="ECO:0007669"/>
    <property type="project" value="UniProtKB-KW"/>
</dbReference>
<dbReference type="GO" id="GO:0005524">
    <property type="term" value="F:ATP binding"/>
    <property type="evidence" value="ECO:0007669"/>
    <property type="project" value="UniProtKB-UniRule"/>
</dbReference>
<dbReference type="GO" id="GO:0046933">
    <property type="term" value="F:proton-transporting ATP synthase activity, rotational mechanism"/>
    <property type="evidence" value="ECO:0007669"/>
    <property type="project" value="UniProtKB-UniRule"/>
</dbReference>
<dbReference type="CDD" id="cd12152">
    <property type="entry name" value="F1-ATPase_delta"/>
    <property type="match status" value="1"/>
</dbReference>
<dbReference type="FunFam" id="2.60.15.10:FF:000001">
    <property type="entry name" value="ATP synthase epsilon chain"/>
    <property type="match status" value="1"/>
</dbReference>
<dbReference type="Gene3D" id="1.20.5.440">
    <property type="entry name" value="ATP synthase delta/epsilon subunit, C-terminal domain"/>
    <property type="match status" value="1"/>
</dbReference>
<dbReference type="Gene3D" id="2.60.15.10">
    <property type="entry name" value="F0F1 ATP synthase delta/epsilon subunit, N-terminal"/>
    <property type="match status" value="1"/>
</dbReference>
<dbReference type="HAMAP" id="MF_00530">
    <property type="entry name" value="ATP_synth_epsil_bac"/>
    <property type="match status" value="1"/>
</dbReference>
<dbReference type="InterPro" id="IPR036794">
    <property type="entry name" value="ATP_F1_dsu/esu_C_sf"/>
</dbReference>
<dbReference type="InterPro" id="IPR001469">
    <property type="entry name" value="ATP_synth_F1_dsu/esu"/>
</dbReference>
<dbReference type="InterPro" id="IPR020546">
    <property type="entry name" value="ATP_synth_F1_dsu/esu_N"/>
</dbReference>
<dbReference type="InterPro" id="IPR020547">
    <property type="entry name" value="ATP_synth_F1_esu_C"/>
</dbReference>
<dbReference type="InterPro" id="IPR036771">
    <property type="entry name" value="ATPsynth_dsu/esu_N"/>
</dbReference>
<dbReference type="NCBIfam" id="TIGR01216">
    <property type="entry name" value="ATP_synt_epsi"/>
    <property type="match status" value="1"/>
</dbReference>
<dbReference type="NCBIfam" id="NF001846">
    <property type="entry name" value="PRK00571.1-3"/>
    <property type="match status" value="1"/>
</dbReference>
<dbReference type="NCBIfam" id="NF009977">
    <property type="entry name" value="PRK13442.1"/>
    <property type="match status" value="1"/>
</dbReference>
<dbReference type="PANTHER" id="PTHR13822">
    <property type="entry name" value="ATP SYNTHASE DELTA/EPSILON CHAIN"/>
    <property type="match status" value="1"/>
</dbReference>
<dbReference type="PANTHER" id="PTHR13822:SF10">
    <property type="entry name" value="ATP SYNTHASE EPSILON CHAIN, CHLOROPLASTIC"/>
    <property type="match status" value="1"/>
</dbReference>
<dbReference type="Pfam" id="PF00401">
    <property type="entry name" value="ATP-synt_DE"/>
    <property type="match status" value="1"/>
</dbReference>
<dbReference type="Pfam" id="PF02823">
    <property type="entry name" value="ATP-synt_DE_N"/>
    <property type="match status" value="1"/>
</dbReference>
<dbReference type="SUPFAM" id="SSF46604">
    <property type="entry name" value="Epsilon subunit of F1F0-ATP synthase C-terminal domain"/>
    <property type="match status" value="1"/>
</dbReference>
<dbReference type="SUPFAM" id="SSF51344">
    <property type="entry name" value="Epsilon subunit of F1F0-ATP synthase N-terminal domain"/>
    <property type="match status" value="1"/>
</dbReference>
<reference key="1">
    <citation type="journal article" date="2011" name="J. Bacteriol.">
        <title>Complete genome sequence of the Thermophilic Bacterium Exiguobacterium sp. AT1b.</title>
        <authorList>
            <person name="Vishnivetskaya T.A."/>
            <person name="Lucas S."/>
            <person name="Copeland A."/>
            <person name="Lapidus A."/>
            <person name="Glavina del Rio T."/>
            <person name="Dalin E."/>
            <person name="Tice H."/>
            <person name="Bruce D.C."/>
            <person name="Goodwin L.A."/>
            <person name="Pitluck S."/>
            <person name="Saunders E."/>
            <person name="Brettin T."/>
            <person name="Detter C."/>
            <person name="Han C."/>
            <person name="Larimer F."/>
            <person name="Land M.L."/>
            <person name="Hauser L.J."/>
            <person name="Kyrpides N.C."/>
            <person name="Ovchinnikova G."/>
            <person name="Kathariou S."/>
            <person name="Ramaley R.F."/>
            <person name="Rodrigues D.F."/>
            <person name="Hendrix C."/>
            <person name="Richardson P."/>
            <person name="Tiedje J.M."/>
        </authorList>
    </citation>
    <scope>NUCLEOTIDE SEQUENCE [LARGE SCALE GENOMIC DNA]</scope>
    <source>
        <strain>ATCC BAA-1283 / AT1b</strain>
    </source>
</reference>
<evidence type="ECO:0000255" key="1">
    <source>
        <dbReference type="HAMAP-Rule" id="MF_00530"/>
    </source>
</evidence>
<sequence>MNTVHVNVVTPDGAAFEGDARMVIAKSVTGELGILPKHIPMVTPLDVSVLKLRHEDGGRTLIAISGGFMEVRPDTVTILAETAEMADKIDYDRASAAKVRAERRLQDTKLSELEFRRAELALKKAINRLSIRDMKE</sequence>
<keyword id="KW-0066">ATP synthesis</keyword>
<keyword id="KW-1003">Cell membrane</keyword>
<keyword id="KW-0139">CF(1)</keyword>
<keyword id="KW-0375">Hydrogen ion transport</keyword>
<keyword id="KW-0406">Ion transport</keyword>
<keyword id="KW-0472">Membrane</keyword>
<keyword id="KW-0813">Transport</keyword>
<feature type="chain" id="PRO_1000211784" description="ATP synthase epsilon chain">
    <location>
        <begin position="1"/>
        <end position="136"/>
    </location>
</feature>
<protein>
    <recommendedName>
        <fullName evidence="1">ATP synthase epsilon chain</fullName>
    </recommendedName>
    <alternativeName>
        <fullName evidence="1">ATP synthase F1 sector epsilon subunit</fullName>
    </alternativeName>
    <alternativeName>
        <fullName evidence="1">F-ATPase epsilon subunit</fullName>
    </alternativeName>
</protein>
<name>ATPE_EXISA</name>
<gene>
    <name evidence="1" type="primary">atpC</name>
    <name type="ordered locus">EAT1b_1308</name>
</gene>
<organism>
    <name type="scientific">Exiguobacterium sp. (strain ATCC BAA-1283 / AT1b)</name>
    <dbReference type="NCBI Taxonomy" id="360911"/>
    <lineage>
        <taxon>Bacteria</taxon>
        <taxon>Bacillati</taxon>
        <taxon>Bacillota</taxon>
        <taxon>Bacilli</taxon>
        <taxon>Bacillales</taxon>
        <taxon>Bacillales Family XII. Incertae Sedis</taxon>
        <taxon>Exiguobacterium</taxon>
    </lineage>
</organism>
<accession>C4KYS2</accession>